<accession>P47684</accession>
<comment type="disruption phenotype">
    <text evidence="2">Probably essential, it was not disrupted in a global transposon mutagenesis study.</text>
</comment>
<comment type="similarity">
    <text evidence="1">Belongs to the bacterial ribosomal protein bS16 family.</text>
</comment>
<proteinExistence type="inferred from homology"/>
<keyword id="KW-1185">Reference proteome</keyword>
<keyword id="KW-0687">Ribonucleoprotein</keyword>
<keyword id="KW-0689">Ribosomal protein</keyword>
<reference key="1">
    <citation type="journal article" date="1995" name="Science">
        <title>The minimal gene complement of Mycoplasma genitalium.</title>
        <authorList>
            <person name="Fraser C.M."/>
            <person name="Gocayne J.D."/>
            <person name="White O."/>
            <person name="Adams M.D."/>
            <person name="Clayton R.A."/>
            <person name="Fleischmann R.D."/>
            <person name="Bult C.J."/>
            <person name="Kerlavage A.R."/>
            <person name="Sutton G.G."/>
            <person name="Kelley J.M."/>
            <person name="Fritchman J.L."/>
            <person name="Weidman J.F."/>
            <person name="Small K.V."/>
            <person name="Sandusky M."/>
            <person name="Fuhrmann J.L."/>
            <person name="Nguyen D.T."/>
            <person name="Utterback T.R."/>
            <person name="Saudek D.M."/>
            <person name="Phillips C.A."/>
            <person name="Merrick J.M."/>
            <person name="Tomb J.-F."/>
            <person name="Dougherty B.A."/>
            <person name="Bott K.F."/>
            <person name="Hu P.-C."/>
            <person name="Lucier T.S."/>
            <person name="Peterson S.N."/>
            <person name="Smith H.O."/>
            <person name="Hutchison C.A. III"/>
            <person name="Venter J.C."/>
        </authorList>
    </citation>
    <scope>NUCLEOTIDE SEQUENCE [LARGE SCALE GENOMIC DNA]</scope>
    <source>
        <strain>ATCC 33530 / DSM 19775 / NCTC 10195 / G37</strain>
    </source>
</reference>
<reference key="2">
    <citation type="journal article" date="2006" name="Proc. Natl. Acad. Sci. U.S.A.">
        <title>Essential genes of a minimal bacterium.</title>
        <authorList>
            <person name="Glass J.I."/>
            <person name="Assad-Garcia N."/>
            <person name="Alperovich N."/>
            <person name="Yooseph S."/>
            <person name="Lewis M.R."/>
            <person name="Maruf M."/>
            <person name="Hutchison C.A. III"/>
            <person name="Smith H.O."/>
            <person name="Venter J.C."/>
        </authorList>
    </citation>
    <scope>DISRUPTION PHENOTYPE</scope>
    <source>
        <strain>ATCC 33530 / DSM 19775 / NCTC 10195 / G37</strain>
    </source>
</reference>
<name>RS16_MYCGE</name>
<feature type="chain" id="PRO_0000167206" description="Small ribosomal subunit protein bS16">
    <location>
        <begin position="1"/>
        <end position="95"/>
    </location>
</feature>
<gene>
    <name evidence="1" type="primary">rpsP</name>
    <name evidence="1" type="synonym">rps16</name>
    <name type="ordered locus">MG446</name>
</gene>
<dbReference type="EMBL" id="L43967">
    <property type="protein sequence ID" value="AAC72466.2"/>
    <property type="molecule type" value="Genomic_DNA"/>
</dbReference>
<dbReference type="PIR" id="C64249">
    <property type="entry name" value="C64249"/>
</dbReference>
<dbReference type="RefSeq" id="WP_009885588.1">
    <property type="nucleotide sequence ID" value="NC_000908.2"/>
</dbReference>
<dbReference type="SMR" id="P47684"/>
<dbReference type="FunCoup" id="P47684">
    <property type="interactions" value="210"/>
</dbReference>
<dbReference type="STRING" id="243273.MG_446"/>
<dbReference type="GeneID" id="88282626"/>
<dbReference type="KEGG" id="mge:MG_446"/>
<dbReference type="eggNOG" id="COG0228">
    <property type="taxonomic scope" value="Bacteria"/>
</dbReference>
<dbReference type="HOGENOM" id="CLU_100590_5_0_14"/>
<dbReference type="InParanoid" id="P47684"/>
<dbReference type="OrthoDB" id="9807878at2"/>
<dbReference type="BioCyc" id="MGEN243273:G1GJ2-539-MONOMER"/>
<dbReference type="Proteomes" id="UP000000807">
    <property type="component" value="Chromosome"/>
</dbReference>
<dbReference type="GO" id="GO:0005737">
    <property type="term" value="C:cytoplasm"/>
    <property type="evidence" value="ECO:0007669"/>
    <property type="project" value="UniProtKB-ARBA"/>
</dbReference>
<dbReference type="GO" id="GO:0015935">
    <property type="term" value="C:small ribosomal subunit"/>
    <property type="evidence" value="ECO:0000318"/>
    <property type="project" value="GO_Central"/>
</dbReference>
<dbReference type="GO" id="GO:0003735">
    <property type="term" value="F:structural constituent of ribosome"/>
    <property type="evidence" value="ECO:0000318"/>
    <property type="project" value="GO_Central"/>
</dbReference>
<dbReference type="GO" id="GO:0006412">
    <property type="term" value="P:translation"/>
    <property type="evidence" value="ECO:0007669"/>
    <property type="project" value="UniProtKB-UniRule"/>
</dbReference>
<dbReference type="FunFam" id="3.30.1320.10:FF:000010">
    <property type="entry name" value="30S ribosomal protein S16"/>
    <property type="match status" value="1"/>
</dbReference>
<dbReference type="Gene3D" id="3.30.1320.10">
    <property type="match status" value="1"/>
</dbReference>
<dbReference type="HAMAP" id="MF_00385">
    <property type="entry name" value="Ribosomal_bS16"/>
    <property type="match status" value="1"/>
</dbReference>
<dbReference type="InterPro" id="IPR000307">
    <property type="entry name" value="Ribosomal_bS16"/>
</dbReference>
<dbReference type="InterPro" id="IPR023803">
    <property type="entry name" value="Ribosomal_bS16_dom_sf"/>
</dbReference>
<dbReference type="NCBIfam" id="TIGR00002">
    <property type="entry name" value="S16"/>
    <property type="match status" value="1"/>
</dbReference>
<dbReference type="PANTHER" id="PTHR12919">
    <property type="entry name" value="30S RIBOSOMAL PROTEIN S16"/>
    <property type="match status" value="1"/>
</dbReference>
<dbReference type="PANTHER" id="PTHR12919:SF20">
    <property type="entry name" value="SMALL RIBOSOMAL SUBUNIT PROTEIN BS16M"/>
    <property type="match status" value="1"/>
</dbReference>
<dbReference type="Pfam" id="PF00886">
    <property type="entry name" value="Ribosomal_S16"/>
    <property type="match status" value="1"/>
</dbReference>
<dbReference type="SUPFAM" id="SSF54565">
    <property type="entry name" value="Ribosomal protein S16"/>
    <property type="match status" value="1"/>
</dbReference>
<sequence>MVKIRLMRMGRVHYPLYRIVAVDSRVKRNGKYIALIGHLNPALKENKCKLDETVALDWLNKGAIPTDTVRSLFSESGLWKKFIESKNKKETSPKK</sequence>
<protein>
    <recommendedName>
        <fullName evidence="1">Small ribosomal subunit protein bS16</fullName>
    </recommendedName>
    <alternativeName>
        <fullName evidence="3">30S ribosomal protein S16</fullName>
    </alternativeName>
</protein>
<evidence type="ECO:0000255" key="1">
    <source>
        <dbReference type="HAMAP-Rule" id="MF_00385"/>
    </source>
</evidence>
<evidence type="ECO:0000269" key="2">
    <source>
    </source>
</evidence>
<evidence type="ECO:0000305" key="3"/>
<organism>
    <name type="scientific">Mycoplasma genitalium (strain ATCC 33530 / DSM 19775 / NCTC 10195 / G37)</name>
    <name type="common">Mycoplasmoides genitalium</name>
    <dbReference type="NCBI Taxonomy" id="243273"/>
    <lineage>
        <taxon>Bacteria</taxon>
        <taxon>Bacillati</taxon>
        <taxon>Mycoplasmatota</taxon>
        <taxon>Mycoplasmoidales</taxon>
        <taxon>Mycoplasmoidaceae</taxon>
        <taxon>Mycoplasmoides</taxon>
    </lineage>
</organism>